<gene>
    <name evidence="1" type="primary">truA</name>
    <name type="ordered locus">stu0122</name>
</gene>
<protein>
    <recommendedName>
        <fullName evidence="1">tRNA pseudouridine synthase A</fullName>
        <ecNumber evidence="1">5.4.99.12</ecNumber>
    </recommendedName>
    <alternativeName>
        <fullName evidence="1">tRNA pseudouridine(38-40) synthase</fullName>
    </alternativeName>
    <alternativeName>
        <fullName evidence="1">tRNA pseudouridylate synthase I</fullName>
    </alternativeName>
    <alternativeName>
        <fullName evidence="1">tRNA-uridine isomerase I</fullName>
    </alternativeName>
</protein>
<proteinExistence type="inferred from homology"/>
<name>TRUA_STRT2</name>
<keyword id="KW-0413">Isomerase</keyword>
<keyword id="KW-1185">Reference proteome</keyword>
<keyword id="KW-0819">tRNA processing</keyword>
<comment type="function">
    <text evidence="1">Formation of pseudouridine at positions 38, 39 and 40 in the anticodon stem and loop of transfer RNAs.</text>
</comment>
<comment type="catalytic activity">
    <reaction evidence="1">
        <text>uridine(38/39/40) in tRNA = pseudouridine(38/39/40) in tRNA</text>
        <dbReference type="Rhea" id="RHEA:22376"/>
        <dbReference type="Rhea" id="RHEA-COMP:10085"/>
        <dbReference type="Rhea" id="RHEA-COMP:10087"/>
        <dbReference type="ChEBI" id="CHEBI:65314"/>
        <dbReference type="ChEBI" id="CHEBI:65315"/>
        <dbReference type="EC" id="5.4.99.12"/>
    </reaction>
</comment>
<comment type="subunit">
    <text evidence="1">Homodimer.</text>
</comment>
<comment type="similarity">
    <text evidence="1">Belongs to the tRNA pseudouridine synthase TruA family.</text>
</comment>
<sequence length="248" mass="27778">MVRYKATISYDGTLFSGFQRQPNARSIQEEIEKTLLRLNSGTPVTVHGAGRTDAGVHAYGQVIHFDLPQERDPEKLRFGLDTQCPDDIDIVSIELVSEEFHARYSKHIKTYEFLVDAGRPKNPMMRNYAIHYPYPLSLALMQEAAMELVGTHDFTGFTASGTSVENKVRTITQASVSIDEKTGFYVFAFSGNGFLYKQVRNMVGTLLKIGNGRMPVSQVKTVLESRDRNLAGPTVAGNGLYLKEIRYE</sequence>
<evidence type="ECO:0000255" key="1">
    <source>
        <dbReference type="HAMAP-Rule" id="MF_00171"/>
    </source>
</evidence>
<dbReference type="EC" id="5.4.99.12" evidence="1"/>
<dbReference type="EMBL" id="CP000023">
    <property type="protein sequence ID" value="AAV59847.1"/>
    <property type="molecule type" value="Genomic_DNA"/>
</dbReference>
<dbReference type="RefSeq" id="WP_002946941.1">
    <property type="nucleotide sequence ID" value="NC_006448.1"/>
</dbReference>
<dbReference type="SMR" id="Q5M6C9"/>
<dbReference type="STRING" id="264199.stu0122"/>
<dbReference type="GeneID" id="66898047"/>
<dbReference type="KEGG" id="stl:stu0122"/>
<dbReference type="PATRIC" id="fig|264199.4.peg.124"/>
<dbReference type="eggNOG" id="COG0101">
    <property type="taxonomic scope" value="Bacteria"/>
</dbReference>
<dbReference type="HOGENOM" id="CLU_014673_0_1_9"/>
<dbReference type="Proteomes" id="UP000001170">
    <property type="component" value="Chromosome"/>
</dbReference>
<dbReference type="GO" id="GO:0003723">
    <property type="term" value="F:RNA binding"/>
    <property type="evidence" value="ECO:0007669"/>
    <property type="project" value="InterPro"/>
</dbReference>
<dbReference type="GO" id="GO:0160147">
    <property type="term" value="F:tRNA pseudouridine(38-40) synthase activity"/>
    <property type="evidence" value="ECO:0007669"/>
    <property type="project" value="UniProtKB-EC"/>
</dbReference>
<dbReference type="GO" id="GO:0031119">
    <property type="term" value="P:tRNA pseudouridine synthesis"/>
    <property type="evidence" value="ECO:0007669"/>
    <property type="project" value="UniProtKB-UniRule"/>
</dbReference>
<dbReference type="CDD" id="cd02570">
    <property type="entry name" value="PseudoU_synth_EcTruA"/>
    <property type="match status" value="1"/>
</dbReference>
<dbReference type="FunFam" id="3.30.70.580:FF:000001">
    <property type="entry name" value="tRNA pseudouridine synthase A"/>
    <property type="match status" value="1"/>
</dbReference>
<dbReference type="Gene3D" id="3.30.70.660">
    <property type="entry name" value="Pseudouridine synthase I, catalytic domain, C-terminal subdomain"/>
    <property type="match status" value="1"/>
</dbReference>
<dbReference type="Gene3D" id="3.30.70.580">
    <property type="entry name" value="Pseudouridine synthase I, catalytic domain, N-terminal subdomain"/>
    <property type="match status" value="1"/>
</dbReference>
<dbReference type="HAMAP" id="MF_00171">
    <property type="entry name" value="TruA"/>
    <property type="match status" value="1"/>
</dbReference>
<dbReference type="InterPro" id="IPR020103">
    <property type="entry name" value="PsdUridine_synth_cat_dom_sf"/>
</dbReference>
<dbReference type="InterPro" id="IPR001406">
    <property type="entry name" value="PsdUridine_synth_TruA"/>
</dbReference>
<dbReference type="InterPro" id="IPR020097">
    <property type="entry name" value="PsdUridine_synth_TruA_a/b_dom"/>
</dbReference>
<dbReference type="InterPro" id="IPR020095">
    <property type="entry name" value="PsdUridine_synth_TruA_C"/>
</dbReference>
<dbReference type="InterPro" id="IPR020094">
    <property type="entry name" value="TruA/RsuA/RluB/E/F_N"/>
</dbReference>
<dbReference type="NCBIfam" id="TIGR00071">
    <property type="entry name" value="hisT_truA"/>
    <property type="match status" value="1"/>
</dbReference>
<dbReference type="PANTHER" id="PTHR11142">
    <property type="entry name" value="PSEUDOURIDYLATE SYNTHASE"/>
    <property type="match status" value="1"/>
</dbReference>
<dbReference type="PANTHER" id="PTHR11142:SF0">
    <property type="entry name" value="TRNA PSEUDOURIDINE SYNTHASE-LIKE 1"/>
    <property type="match status" value="1"/>
</dbReference>
<dbReference type="Pfam" id="PF01416">
    <property type="entry name" value="PseudoU_synth_1"/>
    <property type="match status" value="2"/>
</dbReference>
<dbReference type="PIRSF" id="PIRSF001430">
    <property type="entry name" value="tRNA_psdUrid_synth"/>
    <property type="match status" value="1"/>
</dbReference>
<dbReference type="SUPFAM" id="SSF55120">
    <property type="entry name" value="Pseudouridine synthase"/>
    <property type="match status" value="1"/>
</dbReference>
<feature type="chain" id="PRO_0000057469" description="tRNA pseudouridine synthase A">
    <location>
        <begin position="1"/>
        <end position="248"/>
    </location>
</feature>
<feature type="active site" description="Nucleophile" evidence="1">
    <location>
        <position position="53"/>
    </location>
</feature>
<feature type="binding site" evidence="1">
    <location>
        <position position="111"/>
    </location>
    <ligand>
        <name>substrate</name>
    </ligand>
</feature>
<reference key="1">
    <citation type="journal article" date="2004" name="Nat. Biotechnol.">
        <title>Complete sequence and comparative genome analysis of the dairy bacterium Streptococcus thermophilus.</title>
        <authorList>
            <person name="Bolotin A."/>
            <person name="Quinquis B."/>
            <person name="Renault P."/>
            <person name="Sorokin A."/>
            <person name="Ehrlich S.D."/>
            <person name="Kulakauskas S."/>
            <person name="Lapidus A."/>
            <person name="Goltsman E."/>
            <person name="Mazur M."/>
            <person name="Pusch G.D."/>
            <person name="Fonstein M."/>
            <person name="Overbeek R."/>
            <person name="Kyprides N."/>
            <person name="Purnelle B."/>
            <person name="Prozzi D."/>
            <person name="Ngui K."/>
            <person name="Masuy D."/>
            <person name="Hancy F."/>
            <person name="Burteau S."/>
            <person name="Boutry M."/>
            <person name="Delcour J."/>
            <person name="Goffeau A."/>
            <person name="Hols P."/>
        </authorList>
    </citation>
    <scope>NUCLEOTIDE SEQUENCE [LARGE SCALE GENOMIC DNA]</scope>
    <source>
        <strain>ATCC BAA-250 / LMG 18311</strain>
    </source>
</reference>
<accession>Q5M6C9</accession>
<organism>
    <name type="scientific">Streptococcus thermophilus (strain ATCC BAA-250 / LMG 18311)</name>
    <dbReference type="NCBI Taxonomy" id="264199"/>
    <lineage>
        <taxon>Bacteria</taxon>
        <taxon>Bacillati</taxon>
        <taxon>Bacillota</taxon>
        <taxon>Bacilli</taxon>
        <taxon>Lactobacillales</taxon>
        <taxon>Streptococcaceae</taxon>
        <taxon>Streptococcus</taxon>
    </lineage>
</organism>